<keyword id="KW-0028">Amino-acid biosynthesis</keyword>
<keyword id="KW-0057">Aromatic amino acid biosynthesis</keyword>
<keyword id="KW-0328">Glycosyltransferase</keyword>
<keyword id="KW-0460">Magnesium</keyword>
<keyword id="KW-0479">Metal-binding</keyword>
<keyword id="KW-0808">Transferase</keyword>
<keyword id="KW-0822">Tryptophan biosynthesis</keyword>
<feature type="chain" id="PRO_0000325427" description="Anthranilate phosphoribosyltransferase">
    <location>
        <begin position="1"/>
        <end position="337"/>
    </location>
</feature>
<feature type="binding site" evidence="1">
    <location>
        <position position="82"/>
    </location>
    <ligand>
        <name>5-phospho-alpha-D-ribose 1-diphosphate</name>
        <dbReference type="ChEBI" id="CHEBI:58017"/>
    </ligand>
</feature>
<feature type="binding site" evidence="1">
    <location>
        <position position="82"/>
    </location>
    <ligand>
        <name>anthranilate</name>
        <dbReference type="ChEBI" id="CHEBI:16567"/>
        <label>1</label>
    </ligand>
</feature>
<feature type="binding site" evidence="1">
    <location>
        <begin position="85"/>
        <end position="86"/>
    </location>
    <ligand>
        <name>5-phospho-alpha-D-ribose 1-diphosphate</name>
        <dbReference type="ChEBI" id="CHEBI:58017"/>
    </ligand>
</feature>
<feature type="binding site" evidence="1">
    <location>
        <position position="90"/>
    </location>
    <ligand>
        <name>5-phospho-alpha-D-ribose 1-diphosphate</name>
        <dbReference type="ChEBI" id="CHEBI:58017"/>
    </ligand>
</feature>
<feature type="binding site" evidence="1">
    <location>
        <begin position="92"/>
        <end position="95"/>
    </location>
    <ligand>
        <name>5-phospho-alpha-D-ribose 1-diphosphate</name>
        <dbReference type="ChEBI" id="CHEBI:58017"/>
    </ligand>
</feature>
<feature type="binding site" evidence="1">
    <location>
        <position position="94"/>
    </location>
    <ligand>
        <name>Mg(2+)</name>
        <dbReference type="ChEBI" id="CHEBI:18420"/>
        <label>1</label>
    </ligand>
</feature>
<feature type="binding site" evidence="1">
    <location>
        <begin position="110"/>
        <end position="118"/>
    </location>
    <ligand>
        <name>5-phospho-alpha-D-ribose 1-diphosphate</name>
        <dbReference type="ChEBI" id="CHEBI:58017"/>
    </ligand>
</feature>
<feature type="binding site" evidence="1">
    <location>
        <position position="122"/>
    </location>
    <ligand>
        <name>5-phospho-alpha-D-ribose 1-diphosphate</name>
        <dbReference type="ChEBI" id="CHEBI:58017"/>
    </ligand>
</feature>
<feature type="binding site" evidence="1">
    <location>
        <position position="168"/>
    </location>
    <ligand>
        <name>anthranilate</name>
        <dbReference type="ChEBI" id="CHEBI:16567"/>
        <label>2</label>
    </ligand>
</feature>
<feature type="binding site" evidence="1">
    <location>
        <position position="226"/>
    </location>
    <ligand>
        <name>Mg(2+)</name>
        <dbReference type="ChEBI" id="CHEBI:18420"/>
        <label>2</label>
    </ligand>
</feature>
<feature type="binding site" evidence="1">
    <location>
        <position position="227"/>
    </location>
    <ligand>
        <name>Mg(2+)</name>
        <dbReference type="ChEBI" id="CHEBI:18420"/>
        <label>1</label>
    </ligand>
</feature>
<feature type="binding site" evidence="1">
    <location>
        <position position="227"/>
    </location>
    <ligand>
        <name>Mg(2+)</name>
        <dbReference type="ChEBI" id="CHEBI:18420"/>
        <label>2</label>
    </ligand>
</feature>
<comment type="function">
    <text evidence="1">Catalyzes the transfer of the phosphoribosyl group of 5-phosphorylribose-1-pyrophosphate (PRPP) to anthranilate to yield N-(5'-phosphoribosyl)-anthranilate (PRA).</text>
</comment>
<comment type="catalytic activity">
    <reaction evidence="1">
        <text>N-(5-phospho-beta-D-ribosyl)anthranilate + diphosphate = 5-phospho-alpha-D-ribose 1-diphosphate + anthranilate</text>
        <dbReference type="Rhea" id="RHEA:11768"/>
        <dbReference type="ChEBI" id="CHEBI:16567"/>
        <dbReference type="ChEBI" id="CHEBI:18277"/>
        <dbReference type="ChEBI" id="CHEBI:33019"/>
        <dbReference type="ChEBI" id="CHEBI:58017"/>
        <dbReference type="EC" id="2.4.2.18"/>
    </reaction>
</comment>
<comment type="cofactor">
    <cofactor evidence="1">
        <name>Mg(2+)</name>
        <dbReference type="ChEBI" id="CHEBI:18420"/>
    </cofactor>
    <text evidence="1">Binds 2 magnesium ions per monomer.</text>
</comment>
<comment type="pathway">
    <text evidence="1">Amino-acid biosynthesis; L-tryptophan biosynthesis; L-tryptophan from chorismate: step 2/5.</text>
</comment>
<comment type="subunit">
    <text evidence="1">Homodimer.</text>
</comment>
<comment type="similarity">
    <text evidence="1">Belongs to the anthranilate phosphoribosyltransferase family.</text>
</comment>
<comment type="sequence caution" evidence="2">
    <conflict type="erroneous initiation">
        <sequence resource="EMBL-CDS" id="ABO47647"/>
    </conflict>
    <text>Extended N-terminus.</text>
</comment>
<sequence>MISLKSIVDKLYNLEDLSYQESYQLFDYFIKGQIELPLQTSILTALKLKKETSIEIAAAVEALFDNTKEFPKIKGDLAGIVGTGGDGFNTINISTTAAIVAATAGYKVAKHGGRSVSSKSGSFDLLESFGVNIELAPDQTKQCLELYNLGFLFVPFYSDGFRHIKEARTILKTRTIFNILGPLINPARPNKVVIGVYSKDLILPMAKTLVNLGIDRAVVVYGSGLDEVAIHDDTYVAEIQNNQIIEYKVSPVDFGIDTYAIKDLEGGLPEQNREIIKQILLGKGKEAHNAAVAVNVAMLMKLYDKDDLKQNTQEVLEIIKSGKCFNILQQVINYSNK</sequence>
<evidence type="ECO:0000255" key="1">
    <source>
        <dbReference type="HAMAP-Rule" id="MF_00211"/>
    </source>
</evidence>
<evidence type="ECO:0000305" key="2"/>
<gene>
    <name evidence="1" type="primary">trpD</name>
    <name type="ordered locus">FTW_2023</name>
</gene>
<proteinExistence type="inferred from homology"/>
<organism>
    <name type="scientific">Francisella tularensis subsp. tularensis (strain WY96-3418)</name>
    <dbReference type="NCBI Taxonomy" id="418136"/>
    <lineage>
        <taxon>Bacteria</taxon>
        <taxon>Pseudomonadati</taxon>
        <taxon>Pseudomonadota</taxon>
        <taxon>Gammaproteobacteria</taxon>
        <taxon>Thiotrichales</taxon>
        <taxon>Francisellaceae</taxon>
        <taxon>Francisella</taxon>
    </lineage>
</organism>
<accession>A4J0E5</accession>
<dbReference type="EC" id="2.4.2.18" evidence="1"/>
<dbReference type="EMBL" id="CP000608">
    <property type="protein sequence ID" value="ABO47647.1"/>
    <property type="status" value="ALT_INIT"/>
    <property type="molecule type" value="Genomic_DNA"/>
</dbReference>
<dbReference type="RefSeq" id="WP_003027659.1">
    <property type="nucleotide sequence ID" value="NC_009257.1"/>
</dbReference>
<dbReference type="SMR" id="A4J0E5"/>
<dbReference type="KEGG" id="ftw:FTW_2023"/>
<dbReference type="HOGENOM" id="CLU_034315_3_0_6"/>
<dbReference type="UniPathway" id="UPA00035">
    <property type="reaction ID" value="UER00041"/>
</dbReference>
<dbReference type="GO" id="GO:0005829">
    <property type="term" value="C:cytosol"/>
    <property type="evidence" value="ECO:0007669"/>
    <property type="project" value="TreeGrafter"/>
</dbReference>
<dbReference type="GO" id="GO:0004048">
    <property type="term" value="F:anthranilate phosphoribosyltransferase activity"/>
    <property type="evidence" value="ECO:0007669"/>
    <property type="project" value="UniProtKB-UniRule"/>
</dbReference>
<dbReference type="GO" id="GO:0000287">
    <property type="term" value="F:magnesium ion binding"/>
    <property type="evidence" value="ECO:0007669"/>
    <property type="project" value="UniProtKB-UniRule"/>
</dbReference>
<dbReference type="GO" id="GO:0000162">
    <property type="term" value="P:L-tryptophan biosynthetic process"/>
    <property type="evidence" value="ECO:0007669"/>
    <property type="project" value="UniProtKB-UniRule"/>
</dbReference>
<dbReference type="FunFam" id="3.40.1030.10:FF:000002">
    <property type="entry name" value="Anthranilate phosphoribosyltransferase"/>
    <property type="match status" value="1"/>
</dbReference>
<dbReference type="Gene3D" id="3.40.1030.10">
    <property type="entry name" value="Nucleoside phosphorylase/phosphoribosyltransferase catalytic domain"/>
    <property type="match status" value="1"/>
</dbReference>
<dbReference type="Gene3D" id="1.20.970.10">
    <property type="entry name" value="Transferase, Pyrimidine Nucleoside Phosphorylase, Chain C"/>
    <property type="match status" value="1"/>
</dbReference>
<dbReference type="HAMAP" id="MF_00211">
    <property type="entry name" value="TrpD"/>
    <property type="match status" value="1"/>
</dbReference>
<dbReference type="InterPro" id="IPR005940">
    <property type="entry name" value="Anthranilate_Pribosyl_Tfrase"/>
</dbReference>
<dbReference type="InterPro" id="IPR000312">
    <property type="entry name" value="Glycosyl_Trfase_fam3"/>
</dbReference>
<dbReference type="InterPro" id="IPR017459">
    <property type="entry name" value="Glycosyl_Trfase_fam3_N_dom"/>
</dbReference>
<dbReference type="InterPro" id="IPR036320">
    <property type="entry name" value="Glycosyl_Trfase_fam3_N_dom_sf"/>
</dbReference>
<dbReference type="InterPro" id="IPR035902">
    <property type="entry name" value="Nuc_phospho_transferase"/>
</dbReference>
<dbReference type="NCBIfam" id="TIGR01245">
    <property type="entry name" value="trpD"/>
    <property type="match status" value="1"/>
</dbReference>
<dbReference type="PANTHER" id="PTHR43285">
    <property type="entry name" value="ANTHRANILATE PHOSPHORIBOSYLTRANSFERASE"/>
    <property type="match status" value="1"/>
</dbReference>
<dbReference type="PANTHER" id="PTHR43285:SF2">
    <property type="entry name" value="ANTHRANILATE PHOSPHORIBOSYLTRANSFERASE"/>
    <property type="match status" value="1"/>
</dbReference>
<dbReference type="Pfam" id="PF02885">
    <property type="entry name" value="Glycos_trans_3N"/>
    <property type="match status" value="1"/>
</dbReference>
<dbReference type="Pfam" id="PF00591">
    <property type="entry name" value="Glycos_transf_3"/>
    <property type="match status" value="1"/>
</dbReference>
<dbReference type="SUPFAM" id="SSF52418">
    <property type="entry name" value="Nucleoside phosphorylase/phosphoribosyltransferase catalytic domain"/>
    <property type="match status" value="1"/>
</dbReference>
<dbReference type="SUPFAM" id="SSF47648">
    <property type="entry name" value="Nucleoside phosphorylase/phosphoribosyltransferase N-terminal domain"/>
    <property type="match status" value="1"/>
</dbReference>
<protein>
    <recommendedName>
        <fullName evidence="1">Anthranilate phosphoribosyltransferase</fullName>
        <ecNumber evidence="1">2.4.2.18</ecNumber>
    </recommendedName>
</protein>
<name>TRPD_FRATW</name>
<reference key="1">
    <citation type="journal article" date="2007" name="PLoS ONE">
        <title>Complete genomic characterization of a pathogenic A.II strain of Francisella tularensis subspecies tularensis.</title>
        <authorList>
            <person name="Beckstrom-Sternberg S.M."/>
            <person name="Auerbach R.K."/>
            <person name="Godbole S."/>
            <person name="Pearson J.V."/>
            <person name="Beckstrom-Sternberg J.S."/>
            <person name="Deng Z."/>
            <person name="Munk C."/>
            <person name="Kubota K."/>
            <person name="Zhou Y."/>
            <person name="Bruce D."/>
            <person name="Noronha J."/>
            <person name="Scheuermann R.H."/>
            <person name="Wang A."/>
            <person name="Wei X."/>
            <person name="Wang J."/>
            <person name="Hao J."/>
            <person name="Wagner D.M."/>
            <person name="Brettin T.S."/>
            <person name="Brown N."/>
            <person name="Gilna P."/>
            <person name="Keim P.S."/>
        </authorList>
    </citation>
    <scope>NUCLEOTIDE SEQUENCE [LARGE SCALE GENOMIC DNA]</scope>
    <source>
        <strain>WY96-3418</strain>
    </source>
</reference>